<name>RBFA_DELAS</name>
<evidence type="ECO:0000255" key="1">
    <source>
        <dbReference type="HAMAP-Rule" id="MF_00003"/>
    </source>
</evidence>
<accession>A9C1Z3</accession>
<gene>
    <name evidence="1" type="primary">rbfA</name>
    <name type="ordered locus">Daci_2991</name>
</gene>
<protein>
    <recommendedName>
        <fullName evidence="1">Ribosome-binding factor A</fullName>
    </recommendedName>
</protein>
<sequence length="123" mass="13708">MATRKSAAPNRSFKVSDQIQRDLAELIARELKDPRVGMVTLQSVEVTPDYAHAKVYFSLLVGDPQATQEALNQAAGFLRNGLFKRLHIHTVPTLHFIYDRTSERAADMNALIAKAVSSRGKEE</sequence>
<reference key="1">
    <citation type="submission" date="2007-11" db="EMBL/GenBank/DDBJ databases">
        <title>Complete sequence of Delftia acidovorans DSM 14801 / SPH-1.</title>
        <authorList>
            <person name="Copeland A."/>
            <person name="Lucas S."/>
            <person name="Lapidus A."/>
            <person name="Barry K."/>
            <person name="Glavina del Rio T."/>
            <person name="Dalin E."/>
            <person name="Tice H."/>
            <person name="Pitluck S."/>
            <person name="Lowry S."/>
            <person name="Clum A."/>
            <person name="Schmutz J."/>
            <person name="Larimer F."/>
            <person name="Land M."/>
            <person name="Hauser L."/>
            <person name="Kyrpides N."/>
            <person name="Kim E."/>
            <person name="Schleheck D."/>
            <person name="Richardson P."/>
        </authorList>
    </citation>
    <scope>NUCLEOTIDE SEQUENCE [LARGE SCALE GENOMIC DNA]</scope>
    <source>
        <strain>DSM 14801 / SPH-1</strain>
    </source>
</reference>
<proteinExistence type="inferred from homology"/>
<organism>
    <name type="scientific">Delftia acidovorans (strain DSM 14801 / SPH-1)</name>
    <dbReference type="NCBI Taxonomy" id="398578"/>
    <lineage>
        <taxon>Bacteria</taxon>
        <taxon>Pseudomonadati</taxon>
        <taxon>Pseudomonadota</taxon>
        <taxon>Betaproteobacteria</taxon>
        <taxon>Burkholderiales</taxon>
        <taxon>Comamonadaceae</taxon>
        <taxon>Delftia</taxon>
    </lineage>
</organism>
<keyword id="KW-0963">Cytoplasm</keyword>
<keyword id="KW-1185">Reference proteome</keyword>
<keyword id="KW-0690">Ribosome biogenesis</keyword>
<dbReference type="EMBL" id="CP000884">
    <property type="protein sequence ID" value="ABX35629.1"/>
    <property type="molecule type" value="Genomic_DNA"/>
</dbReference>
<dbReference type="RefSeq" id="WP_012204835.1">
    <property type="nucleotide sequence ID" value="NC_010002.1"/>
</dbReference>
<dbReference type="SMR" id="A9C1Z3"/>
<dbReference type="STRING" id="398578.Daci_2991"/>
<dbReference type="GeneID" id="24117089"/>
<dbReference type="KEGG" id="dac:Daci_2991"/>
<dbReference type="eggNOG" id="COG0858">
    <property type="taxonomic scope" value="Bacteria"/>
</dbReference>
<dbReference type="HOGENOM" id="CLU_089475_5_1_4"/>
<dbReference type="Proteomes" id="UP000000784">
    <property type="component" value="Chromosome"/>
</dbReference>
<dbReference type="GO" id="GO:0005829">
    <property type="term" value="C:cytosol"/>
    <property type="evidence" value="ECO:0007669"/>
    <property type="project" value="TreeGrafter"/>
</dbReference>
<dbReference type="GO" id="GO:0043024">
    <property type="term" value="F:ribosomal small subunit binding"/>
    <property type="evidence" value="ECO:0007669"/>
    <property type="project" value="TreeGrafter"/>
</dbReference>
<dbReference type="GO" id="GO:0030490">
    <property type="term" value="P:maturation of SSU-rRNA"/>
    <property type="evidence" value="ECO:0007669"/>
    <property type="project" value="UniProtKB-UniRule"/>
</dbReference>
<dbReference type="Gene3D" id="3.30.300.20">
    <property type="match status" value="1"/>
</dbReference>
<dbReference type="HAMAP" id="MF_00003">
    <property type="entry name" value="RbfA"/>
    <property type="match status" value="1"/>
</dbReference>
<dbReference type="InterPro" id="IPR015946">
    <property type="entry name" value="KH_dom-like_a/b"/>
</dbReference>
<dbReference type="InterPro" id="IPR000238">
    <property type="entry name" value="RbfA"/>
</dbReference>
<dbReference type="InterPro" id="IPR023799">
    <property type="entry name" value="RbfA_dom_sf"/>
</dbReference>
<dbReference type="NCBIfam" id="TIGR00082">
    <property type="entry name" value="rbfA"/>
    <property type="match status" value="1"/>
</dbReference>
<dbReference type="PANTHER" id="PTHR33515">
    <property type="entry name" value="RIBOSOME-BINDING FACTOR A, CHLOROPLASTIC-RELATED"/>
    <property type="match status" value="1"/>
</dbReference>
<dbReference type="PANTHER" id="PTHR33515:SF1">
    <property type="entry name" value="RIBOSOME-BINDING FACTOR A, CHLOROPLASTIC-RELATED"/>
    <property type="match status" value="1"/>
</dbReference>
<dbReference type="Pfam" id="PF02033">
    <property type="entry name" value="RBFA"/>
    <property type="match status" value="1"/>
</dbReference>
<dbReference type="SUPFAM" id="SSF89919">
    <property type="entry name" value="Ribosome-binding factor A, RbfA"/>
    <property type="match status" value="1"/>
</dbReference>
<comment type="function">
    <text evidence="1">One of several proteins that assist in the late maturation steps of the functional core of the 30S ribosomal subunit. Associates with free 30S ribosomal subunits (but not with 30S subunits that are part of 70S ribosomes or polysomes). Required for efficient processing of 16S rRNA. May interact with the 5'-terminal helix region of 16S rRNA.</text>
</comment>
<comment type="subunit">
    <text evidence="1">Monomer. Binds 30S ribosomal subunits, but not 50S ribosomal subunits or 70S ribosomes.</text>
</comment>
<comment type="subcellular location">
    <subcellularLocation>
        <location evidence="1">Cytoplasm</location>
    </subcellularLocation>
</comment>
<comment type="similarity">
    <text evidence="1">Belongs to the RbfA family.</text>
</comment>
<feature type="chain" id="PRO_1000088883" description="Ribosome-binding factor A">
    <location>
        <begin position="1"/>
        <end position="123"/>
    </location>
</feature>